<dbReference type="EC" id="3.4.24.-" evidence="2"/>
<dbReference type="EMBL" id="DS231665">
    <property type="protein sequence ID" value="ESU11935.1"/>
    <property type="molecule type" value="Genomic_DNA"/>
</dbReference>
<dbReference type="EMBL" id="HG970334">
    <property type="protein sequence ID" value="CEF87216.1"/>
    <property type="molecule type" value="Genomic_DNA"/>
</dbReference>
<dbReference type="RefSeq" id="XP_011324511.1">
    <property type="nucleotide sequence ID" value="XM_011326209.1"/>
</dbReference>
<dbReference type="SMR" id="Q4IA56"/>
<dbReference type="FunCoup" id="Q4IA56">
    <property type="interactions" value="674"/>
</dbReference>
<dbReference type="STRING" id="229533.Q4IA56"/>
<dbReference type="GeneID" id="23553054"/>
<dbReference type="KEGG" id="fgr:FGSG_05902"/>
<dbReference type="VEuPathDB" id="FungiDB:FGRAMPH1_01G19043"/>
<dbReference type="eggNOG" id="KOG2019">
    <property type="taxonomic scope" value="Eukaryota"/>
</dbReference>
<dbReference type="HOGENOM" id="CLU_009165_0_0_1"/>
<dbReference type="InParanoid" id="Q4IA56"/>
<dbReference type="OrthoDB" id="30443at110618"/>
<dbReference type="Proteomes" id="UP000070720">
    <property type="component" value="Chromosome 3"/>
</dbReference>
<dbReference type="GO" id="GO:0005758">
    <property type="term" value="C:mitochondrial intermembrane space"/>
    <property type="evidence" value="ECO:0007669"/>
    <property type="project" value="UniProtKB-SubCell"/>
</dbReference>
<dbReference type="GO" id="GO:0005759">
    <property type="term" value="C:mitochondrial matrix"/>
    <property type="evidence" value="ECO:0007669"/>
    <property type="project" value="UniProtKB-SubCell"/>
</dbReference>
<dbReference type="GO" id="GO:0004222">
    <property type="term" value="F:metalloendopeptidase activity"/>
    <property type="evidence" value="ECO:0007669"/>
    <property type="project" value="TreeGrafter"/>
</dbReference>
<dbReference type="GO" id="GO:0008270">
    <property type="term" value="F:zinc ion binding"/>
    <property type="evidence" value="ECO:0000250"/>
    <property type="project" value="UniProtKB"/>
</dbReference>
<dbReference type="GO" id="GO:0016485">
    <property type="term" value="P:protein processing"/>
    <property type="evidence" value="ECO:0000250"/>
    <property type="project" value="UniProtKB"/>
</dbReference>
<dbReference type="FunFam" id="3.30.830.10:FF:000013">
    <property type="entry name" value="Mitochondrial presequence protease"/>
    <property type="match status" value="1"/>
</dbReference>
<dbReference type="FunFam" id="3.30.830.10:FF:000009">
    <property type="entry name" value="Presequence protease, mitochondrial"/>
    <property type="match status" value="1"/>
</dbReference>
<dbReference type="FunFam" id="3.30.830.10:FF:000011">
    <property type="entry name" value="Presequence protease, mitochondrial"/>
    <property type="match status" value="1"/>
</dbReference>
<dbReference type="Gene3D" id="3.30.830.10">
    <property type="entry name" value="Metalloenzyme, LuxS/M16 peptidase-like"/>
    <property type="match status" value="4"/>
</dbReference>
<dbReference type="InterPro" id="IPR011249">
    <property type="entry name" value="Metalloenz_LuxS/M16"/>
</dbReference>
<dbReference type="InterPro" id="IPR011765">
    <property type="entry name" value="Pept_M16_N"/>
</dbReference>
<dbReference type="InterPro" id="IPR007863">
    <property type="entry name" value="Peptidase_M16_C"/>
</dbReference>
<dbReference type="InterPro" id="IPR013578">
    <property type="entry name" value="Peptidase_M16C_assoc"/>
</dbReference>
<dbReference type="InterPro" id="IPR055130">
    <property type="entry name" value="PreP_C"/>
</dbReference>
<dbReference type="PANTHER" id="PTHR43016">
    <property type="entry name" value="PRESEQUENCE PROTEASE"/>
    <property type="match status" value="1"/>
</dbReference>
<dbReference type="PANTHER" id="PTHR43016:SF13">
    <property type="entry name" value="PRESEQUENCE PROTEASE, MITOCHONDRIAL"/>
    <property type="match status" value="1"/>
</dbReference>
<dbReference type="Pfam" id="PF08367">
    <property type="entry name" value="M16C_assoc"/>
    <property type="match status" value="1"/>
</dbReference>
<dbReference type="Pfam" id="PF00675">
    <property type="entry name" value="Peptidase_M16"/>
    <property type="match status" value="1"/>
</dbReference>
<dbReference type="Pfam" id="PF05193">
    <property type="entry name" value="Peptidase_M16_C"/>
    <property type="match status" value="1"/>
</dbReference>
<dbReference type="Pfam" id="PF22516">
    <property type="entry name" value="PreP_C"/>
    <property type="match status" value="1"/>
</dbReference>
<dbReference type="SMART" id="SM01264">
    <property type="entry name" value="M16C_associated"/>
    <property type="match status" value="1"/>
</dbReference>
<dbReference type="SUPFAM" id="SSF63411">
    <property type="entry name" value="LuxS/MPP-like metallohydrolase"/>
    <property type="match status" value="4"/>
</dbReference>
<reference key="1">
    <citation type="journal article" date="2007" name="Science">
        <title>The Fusarium graminearum genome reveals a link between localized polymorphism and pathogen specialization.</title>
        <authorList>
            <person name="Cuomo C.A."/>
            <person name="Gueldener U."/>
            <person name="Xu J.-R."/>
            <person name="Trail F."/>
            <person name="Turgeon B.G."/>
            <person name="Di Pietro A."/>
            <person name="Walton J.D."/>
            <person name="Ma L.-J."/>
            <person name="Baker S.E."/>
            <person name="Rep M."/>
            <person name="Adam G."/>
            <person name="Antoniw J."/>
            <person name="Baldwin T."/>
            <person name="Calvo S.E."/>
            <person name="Chang Y.-L."/>
            <person name="DeCaprio D."/>
            <person name="Gale L.R."/>
            <person name="Gnerre S."/>
            <person name="Goswami R.S."/>
            <person name="Hammond-Kosack K."/>
            <person name="Harris L.J."/>
            <person name="Hilburn K."/>
            <person name="Kennell J.C."/>
            <person name="Kroken S."/>
            <person name="Magnuson J.K."/>
            <person name="Mannhaupt G."/>
            <person name="Mauceli E.W."/>
            <person name="Mewes H.-W."/>
            <person name="Mitterbauer R."/>
            <person name="Muehlbauer G."/>
            <person name="Muensterkoetter M."/>
            <person name="Nelson D."/>
            <person name="O'Donnell K."/>
            <person name="Ouellet T."/>
            <person name="Qi W."/>
            <person name="Quesneville H."/>
            <person name="Roncero M.I.G."/>
            <person name="Seong K.-Y."/>
            <person name="Tetko I.V."/>
            <person name="Urban M."/>
            <person name="Waalwijk C."/>
            <person name="Ward T.J."/>
            <person name="Yao J."/>
            <person name="Birren B.W."/>
            <person name="Kistler H.C."/>
        </authorList>
    </citation>
    <scope>NUCLEOTIDE SEQUENCE [LARGE SCALE GENOMIC DNA]</scope>
    <source>
        <strain>ATCC MYA-4620 / CBS 123657 / FGSC 9075 / NRRL 31084 / PH-1</strain>
    </source>
</reference>
<reference key="2">
    <citation type="journal article" date="2010" name="Nature">
        <title>Comparative genomics reveals mobile pathogenicity chromosomes in Fusarium.</title>
        <authorList>
            <person name="Ma L.-J."/>
            <person name="van der Does H.C."/>
            <person name="Borkovich K.A."/>
            <person name="Coleman J.J."/>
            <person name="Daboussi M.-J."/>
            <person name="Di Pietro A."/>
            <person name="Dufresne M."/>
            <person name="Freitag M."/>
            <person name="Grabherr M."/>
            <person name="Henrissat B."/>
            <person name="Houterman P.M."/>
            <person name="Kang S."/>
            <person name="Shim W.-B."/>
            <person name="Woloshuk C."/>
            <person name="Xie X."/>
            <person name="Xu J.-R."/>
            <person name="Antoniw J."/>
            <person name="Baker S.E."/>
            <person name="Bluhm B.H."/>
            <person name="Breakspear A."/>
            <person name="Brown D.W."/>
            <person name="Butchko R.A.E."/>
            <person name="Chapman S."/>
            <person name="Coulson R."/>
            <person name="Coutinho P.M."/>
            <person name="Danchin E.G.J."/>
            <person name="Diener A."/>
            <person name="Gale L.R."/>
            <person name="Gardiner D.M."/>
            <person name="Goff S."/>
            <person name="Hammond-Kosack K.E."/>
            <person name="Hilburn K."/>
            <person name="Hua-Van A."/>
            <person name="Jonkers W."/>
            <person name="Kazan K."/>
            <person name="Kodira C.D."/>
            <person name="Koehrsen M."/>
            <person name="Kumar L."/>
            <person name="Lee Y.-H."/>
            <person name="Li L."/>
            <person name="Manners J.M."/>
            <person name="Miranda-Saavedra D."/>
            <person name="Mukherjee M."/>
            <person name="Park G."/>
            <person name="Park J."/>
            <person name="Park S.-Y."/>
            <person name="Proctor R.H."/>
            <person name="Regev A."/>
            <person name="Ruiz-Roldan M.C."/>
            <person name="Sain D."/>
            <person name="Sakthikumar S."/>
            <person name="Sykes S."/>
            <person name="Schwartz D.C."/>
            <person name="Turgeon B.G."/>
            <person name="Wapinski I."/>
            <person name="Yoder O."/>
            <person name="Young S."/>
            <person name="Zeng Q."/>
            <person name="Zhou S."/>
            <person name="Galagan J."/>
            <person name="Cuomo C.A."/>
            <person name="Kistler H.C."/>
            <person name="Rep M."/>
        </authorList>
    </citation>
    <scope>GENOME REANNOTATION</scope>
    <source>
        <strain>ATCC MYA-4620 / CBS 123657 / FGSC 9075 / NRRL 31084 / PH-1</strain>
    </source>
</reference>
<reference key="3">
    <citation type="journal article" date="2015" name="BMC Genomics">
        <title>The completed genome sequence of the pathogenic ascomycete fungus Fusarium graminearum.</title>
        <authorList>
            <person name="King R."/>
            <person name="Urban M."/>
            <person name="Hammond-Kosack M.C.U."/>
            <person name="Hassani-Pak K."/>
            <person name="Hammond-Kosack K.E."/>
        </authorList>
    </citation>
    <scope>NUCLEOTIDE SEQUENCE [LARGE SCALE GENOMIC DNA]</scope>
    <source>
        <strain>ATCC MYA-4620 / CBS 123657 / FGSC 9075 / NRRL 31084 / PH-1</strain>
    </source>
</reference>
<evidence type="ECO:0000250" key="1">
    <source>
        <dbReference type="UniProtKB" id="A0A8H8UNX0"/>
    </source>
</evidence>
<evidence type="ECO:0000250" key="2">
    <source>
        <dbReference type="UniProtKB" id="P32898"/>
    </source>
</evidence>
<evidence type="ECO:0000250" key="3">
    <source>
        <dbReference type="UniProtKB" id="Q5JRX3"/>
    </source>
</evidence>
<evidence type="ECO:0000250" key="4">
    <source>
        <dbReference type="UniProtKB" id="Q9LJL3"/>
    </source>
</evidence>
<evidence type="ECO:0000255" key="5"/>
<evidence type="ECO:0000305" key="6"/>
<comment type="function">
    <text evidence="1 2">Degrades mitochondrial transit peptides after their cleavage in the intermembrane space or in the matrix, and presequence peptides; clearance of these peptides is required to keep the presequence processing machinery running (By similarity). Preferentially cleaves the N-terminal side of paired basic amino acid residues (By similarity). Also degrades other unstructured peptides (By similarity). May function as an ATP-dependent peptidase as opposed to a metalloendopeptidase (By similarity).</text>
</comment>
<comment type="cofactor">
    <cofactor evidence="3">
        <name>Zn(2+)</name>
        <dbReference type="ChEBI" id="CHEBI:29105"/>
    </cofactor>
    <text evidence="3">Binds 1 zinc ion per subunit.</text>
</comment>
<comment type="subunit">
    <text evidence="3">Monomer and homodimer; homodimerization is induced by binding of the substrate.</text>
</comment>
<comment type="subcellular location">
    <subcellularLocation>
        <location evidence="2">Mitochondrion intermembrane space</location>
    </subcellularLocation>
    <subcellularLocation>
        <location evidence="2">Mitochondrion matrix</location>
    </subcellularLocation>
</comment>
<comment type="similarity">
    <text evidence="6">Belongs to the peptidase M16 family. PreP subfamily.</text>
</comment>
<protein>
    <recommendedName>
        <fullName>Presequence protease, mitochondrial</fullName>
        <shortName>PreP</shortName>
        <ecNumber evidence="2">3.4.24.-</ecNumber>
    </recommendedName>
    <alternativeName>
        <fullName>Pitrilysin metalloproteinase</fullName>
    </alternativeName>
</protein>
<accession>Q4IA56</accession>
<accession>A0A098DZE2</accession>
<accession>A0A0E0SLA3</accession>
<accession>V6RJ37</accession>
<proteinExistence type="inferred from homology"/>
<sequence>MLRNAAAGARKAVTELSQFPKPGEKLHGFTLVRSKHVPELELTALHLQHDKTGADYLHIARDDSNNVFSIGFKTNPPDDTGIPHILEHTTLCGSEKYPIRDPFFKMLPRTLSNFMNAFTASDHTFYPFATTNAQDFKNLMSVYLDSTLHPLLKKSDFTQEGWRIGPENPLAEDEASKKLVFKGVVYNEMKGQMSDAGYLYYIRFHDHIFPDINNSGGDPQKITDLTYEQLQKFHAEHYHPSNAKVFTYGDMPLIDHLKQVDTQLQAFEKIQGDKQVHEPVTLNGPKEVTLYGPLDPLVDQDRQYKTSVSWIMGDTTDVLESFSLALLSTLLMDGYGSPLYRGLIEAGMGADWSPNAGYDSSAKKGIFSIGLTGVQEGDVPKLKEKVQQILRDARNKGFDKTKIDGSLHQLELSLKHKTANFGFSMLNRLKPKWFNGVDPFDSLAWNDTINGFQAKMAEGNYLEGLIDKYLLNDNTLTFTMAPSTTYGEDLVKEEQERLSTRIQAAIKEAGSEEKARKHFEKQEQELLVEQNKTNTEDLGCLPTVHVKDIPRSKEAVVVRDENANGTKIQWHEAPTNGLTYFRAINTLENLPDELRELVPLFTDSIMRLGTKDLNMEQLEDLIKLKTGGVSVGYHCTPSPTDFHAASEGIIFTGMALDHNVPVMFDIIQKLVLGTDFDSPEAALRIRQLLQASADGVVNDIASTGHRFAMGSAESGLTRSAWLRQQVSGLSQVQLVTSLASRPETDKLEDVISKLKQIQNLALVGGNLRTAITCGSESVAANGASLQNFVGNLSRDPLNLKNPSPRQLPKDSKTFYPLPYQVYYGGLSLPTTSYTSAEGAPLQILSQLLTHKHLHHEIREKGGAYGGGAYSRALDGLFGFYSYRDPNPQNTLSIMRNAGQWAVDKKWSDRDLEEAKISVFQGVDAPKSVNQEGMGRFLSGITEEMKQKKREQFLDVTKDQVREAAQRYLVDGLAKGEGRVAFLGEKQAWVDGEWQIREMDVKGAE</sequence>
<keyword id="KW-0378">Hydrolase</keyword>
<keyword id="KW-0479">Metal-binding</keyword>
<keyword id="KW-0482">Metalloprotease</keyword>
<keyword id="KW-0496">Mitochondrion</keyword>
<keyword id="KW-0645">Protease</keyword>
<keyword id="KW-1185">Reference proteome</keyword>
<keyword id="KW-0809">Transit peptide</keyword>
<keyword id="KW-0862">Zinc</keyword>
<gene>
    <name type="primary">CYM1</name>
    <name type="ORF">FGRRES_05902</name>
    <name type="ORF">FGSG_05902</name>
</gene>
<feature type="transit peptide" description="Mitochondrion" evidence="5">
    <location>
        <begin position="1"/>
        <end position="34"/>
    </location>
</feature>
<feature type="chain" id="PRO_0000249947" description="Presequence protease, mitochondrial">
    <location>
        <begin position="35"/>
        <end position="1004"/>
    </location>
</feature>
<feature type="active site" description="Proton acceptor" evidence="3">
    <location>
        <position position="87"/>
    </location>
</feature>
<feature type="active site" evidence="4">
    <location>
        <position position="160"/>
    </location>
</feature>
<feature type="binding site" evidence="3">
    <location>
        <position position="84"/>
    </location>
    <ligand>
        <name>Zn(2+)</name>
        <dbReference type="ChEBI" id="CHEBI:29105"/>
        <note>catalytic</note>
    </ligand>
</feature>
<feature type="binding site" evidence="3">
    <location>
        <position position="88"/>
    </location>
    <ligand>
        <name>Zn(2+)</name>
        <dbReference type="ChEBI" id="CHEBI:29105"/>
        <note>catalytic</note>
    </ligand>
</feature>
<feature type="binding site" evidence="3">
    <location>
        <position position="188"/>
    </location>
    <ligand>
        <name>Zn(2+)</name>
        <dbReference type="ChEBI" id="CHEBI:29105"/>
        <note>catalytic</note>
    </ligand>
</feature>
<name>PREP_GIBZE</name>
<organism>
    <name type="scientific">Gibberella zeae (strain ATCC MYA-4620 / CBS 123657 / FGSC 9075 / NRRL 31084 / PH-1)</name>
    <name type="common">Wheat head blight fungus</name>
    <name type="synonym">Fusarium graminearum</name>
    <dbReference type="NCBI Taxonomy" id="229533"/>
    <lineage>
        <taxon>Eukaryota</taxon>
        <taxon>Fungi</taxon>
        <taxon>Dikarya</taxon>
        <taxon>Ascomycota</taxon>
        <taxon>Pezizomycotina</taxon>
        <taxon>Sordariomycetes</taxon>
        <taxon>Hypocreomycetidae</taxon>
        <taxon>Hypocreales</taxon>
        <taxon>Nectriaceae</taxon>
        <taxon>Fusarium</taxon>
    </lineage>
</organism>